<protein>
    <recommendedName>
        <fullName evidence="1">Large ribosomal subunit protein bL34</fullName>
    </recommendedName>
    <alternativeName>
        <fullName evidence="3">50S ribosomal protein L34</fullName>
    </alternativeName>
</protein>
<dbReference type="EMBL" id="CR626927">
    <property type="protein sequence ID" value="CAH06194.1"/>
    <property type="molecule type" value="Genomic_DNA"/>
</dbReference>
<dbReference type="RefSeq" id="WP_004292199.1">
    <property type="nucleotide sequence ID" value="NZ_UFTH01000001.1"/>
</dbReference>
<dbReference type="SMR" id="Q5LI34"/>
<dbReference type="PaxDb" id="272559-BF9343_0415"/>
<dbReference type="GeneID" id="94548252"/>
<dbReference type="KEGG" id="bfs:BF9343_0415"/>
<dbReference type="eggNOG" id="COG0230">
    <property type="taxonomic scope" value="Bacteria"/>
</dbReference>
<dbReference type="HOGENOM" id="CLU_129938_2_0_10"/>
<dbReference type="Proteomes" id="UP000006731">
    <property type="component" value="Chromosome"/>
</dbReference>
<dbReference type="GO" id="GO:1990904">
    <property type="term" value="C:ribonucleoprotein complex"/>
    <property type="evidence" value="ECO:0007669"/>
    <property type="project" value="UniProtKB-KW"/>
</dbReference>
<dbReference type="GO" id="GO:0005840">
    <property type="term" value="C:ribosome"/>
    <property type="evidence" value="ECO:0007669"/>
    <property type="project" value="UniProtKB-KW"/>
</dbReference>
<dbReference type="GO" id="GO:0003735">
    <property type="term" value="F:structural constituent of ribosome"/>
    <property type="evidence" value="ECO:0007669"/>
    <property type="project" value="InterPro"/>
</dbReference>
<dbReference type="GO" id="GO:0006412">
    <property type="term" value="P:translation"/>
    <property type="evidence" value="ECO:0007669"/>
    <property type="project" value="UniProtKB-UniRule"/>
</dbReference>
<dbReference type="FunFam" id="1.10.287.3980:FF:000001">
    <property type="entry name" value="Mitochondrial ribosomal protein L34"/>
    <property type="match status" value="1"/>
</dbReference>
<dbReference type="Gene3D" id="1.10.287.3980">
    <property type="match status" value="1"/>
</dbReference>
<dbReference type="HAMAP" id="MF_00391">
    <property type="entry name" value="Ribosomal_bL34"/>
    <property type="match status" value="1"/>
</dbReference>
<dbReference type="InterPro" id="IPR000271">
    <property type="entry name" value="Ribosomal_bL34"/>
</dbReference>
<dbReference type="InterPro" id="IPR020939">
    <property type="entry name" value="Ribosomal_bL34_CS"/>
</dbReference>
<dbReference type="NCBIfam" id="TIGR01030">
    <property type="entry name" value="rpmH_bact"/>
    <property type="match status" value="1"/>
</dbReference>
<dbReference type="PANTHER" id="PTHR14503:SF4">
    <property type="entry name" value="LARGE RIBOSOMAL SUBUNIT PROTEIN BL34M"/>
    <property type="match status" value="1"/>
</dbReference>
<dbReference type="PANTHER" id="PTHR14503">
    <property type="entry name" value="MITOCHONDRIAL RIBOSOMAL PROTEIN 34 FAMILY MEMBER"/>
    <property type="match status" value="1"/>
</dbReference>
<dbReference type="Pfam" id="PF00468">
    <property type="entry name" value="Ribosomal_L34"/>
    <property type="match status" value="1"/>
</dbReference>
<dbReference type="PROSITE" id="PS00784">
    <property type="entry name" value="RIBOSOMAL_L34"/>
    <property type="match status" value="1"/>
</dbReference>
<sequence>MKRTFQPSNRKRKNKHGFRERMATANGRRVLAARRAKGRKKLTVSDEYNGVKA</sequence>
<reference key="1">
    <citation type="journal article" date="2005" name="Science">
        <title>Extensive DNA inversions in the B. fragilis genome control variable gene expression.</title>
        <authorList>
            <person name="Cerdeno-Tarraga A.-M."/>
            <person name="Patrick S."/>
            <person name="Crossman L.C."/>
            <person name="Blakely G."/>
            <person name="Abratt V."/>
            <person name="Lennard N."/>
            <person name="Poxton I."/>
            <person name="Duerden B."/>
            <person name="Harris B."/>
            <person name="Quail M.A."/>
            <person name="Barron A."/>
            <person name="Clark L."/>
            <person name="Corton C."/>
            <person name="Doggett J."/>
            <person name="Holden M.T.G."/>
            <person name="Larke N."/>
            <person name="Line A."/>
            <person name="Lord A."/>
            <person name="Norbertczak H."/>
            <person name="Ormond D."/>
            <person name="Price C."/>
            <person name="Rabbinowitsch E."/>
            <person name="Woodward J."/>
            <person name="Barrell B.G."/>
            <person name="Parkhill J."/>
        </authorList>
    </citation>
    <scope>NUCLEOTIDE SEQUENCE [LARGE SCALE GENOMIC DNA]</scope>
    <source>
        <strain>ATCC 25285 / DSM 2151 / CCUG 4856 / JCM 11019 / LMG 10263 / NCTC 9343 / Onslow / VPI 2553 / EN-2</strain>
    </source>
</reference>
<keyword id="KW-0687">Ribonucleoprotein</keyword>
<keyword id="KW-0689">Ribosomal protein</keyword>
<proteinExistence type="inferred from homology"/>
<evidence type="ECO:0000255" key="1">
    <source>
        <dbReference type="HAMAP-Rule" id="MF_00391"/>
    </source>
</evidence>
<evidence type="ECO:0000256" key="2">
    <source>
        <dbReference type="SAM" id="MobiDB-lite"/>
    </source>
</evidence>
<evidence type="ECO:0000305" key="3"/>
<organism>
    <name type="scientific">Bacteroides fragilis (strain ATCC 25285 / DSM 2151 / CCUG 4856 / JCM 11019 / LMG 10263 / NCTC 9343 / Onslow / VPI 2553 / EN-2)</name>
    <dbReference type="NCBI Taxonomy" id="272559"/>
    <lineage>
        <taxon>Bacteria</taxon>
        <taxon>Pseudomonadati</taxon>
        <taxon>Bacteroidota</taxon>
        <taxon>Bacteroidia</taxon>
        <taxon>Bacteroidales</taxon>
        <taxon>Bacteroidaceae</taxon>
        <taxon>Bacteroides</taxon>
    </lineage>
</organism>
<feature type="chain" id="PRO_1000013281" description="Large ribosomal subunit protein bL34">
    <location>
        <begin position="1"/>
        <end position="53"/>
    </location>
</feature>
<feature type="region of interest" description="Disordered" evidence="2">
    <location>
        <begin position="1"/>
        <end position="20"/>
    </location>
</feature>
<feature type="region of interest" description="Disordered" evidence="2">
    <location>
        <begin position="32"/>
        <end position="53"/>
    </location>
</feature>
<feature type="compositionally biased region" description="Basic residues" evidence="2">
    <location>
        <begin position="1"/>
        <end position="16"/>
    </location>
</feature>
<feature type="compositionally biased region" description="Basic residues" evidence="2">
    <location>
        <begin position="32"/>
        <end position="42"/>
    </location>
</feature>
<name>RL34_BACFN</name>
<comment type="similarity">
    <text evidence="1">Belongs to the bacterial ribosomal protein bL34 family.</text>
</comment>
<gene>
    <name evidence="1" type="primary">rpmH</name>
    <name type="ordered locus">BF0432</name>
</gene>
<accession>Q5LI34</accession>